<proteinExistence type="inferred from homology"/>
<accession>Q0I0L4</accession>
<gene>
    <name evidence="1" type="primary">mtnC</name>
    <name type="ordered locus">Shewmr7_0085</name>
</gene>
<sequence>MGIRAIVVDTAGTTTDLTFIQDVLFPYSVKALPDFLAQNQHNVLVENCICDTRDIALEPDADLARVTEILQQWVHEDRKATPLKTLQGLIWKQGYAHGEFTGHIFPDFIEAVNRFSAQKLRIYSFSSGSVEAQKLLFSHSDGGDLTEMFSGHFDTRTGNKLDKQAYANILNTISLSPKQVLFVSDVVEELKAAEAAGMMTCQMVRDSKQRTGDFRTINSFDELVID</sequence>
<organism>
    <name type="scientific">Shewanella sp. (strain MR-7)</name>
    <dbReference type="NCBI Taxonomy" id="60481"/>
    <lineage>
        <taxon>Bacteria</taxon>
        <taxon>Pseudomonadati</taxon>
        <taxon>Pseudomonadota</taxon>
        <taxon>Gammaproteobacteria</taxon>
        <taxon>Alteromonadales</taxon>
        <taxon>Shewanellaceae</taxon>
        <taxon>Shewanella</taxon>
    </lineage>
</organism>
<dbReference type="EC" id="3.1.3.77" evidence="1"/>
<dbReference type="EMBL" id="CP000444">
    <property type="protein sequence ID" value="ABI41091.1"/>
    <property type="molecule type" value="Genomic_DNA"/>
</dbReference>
<dbReference type="SMR" id="Q0I0L4"/>
<dbReference type="KEGG" id="shm:Shewmr7_0085"/>
<dbReference type="HOGENOM" id="CLU_023273_0_0_6"/>
<dbReference type="UniPathway" id="UPA00904">
    <property type="reaction ID" value="UER00876"/>
</dbReference>
<dbReference type="UniPathway" id="UPA00904">
    <property type="reaction ID" value="UER00877"/>
</dbReference>
<dbReference type="GO" id="GO:0043715">
    <property type="term" value="F:2,3-diketo-5-methylthiopentyl-1-phosphate enolase activity"/>
    <property type="evidence" value="ECO:0007669"/>
    <property type="project" value="UniProtKB-UniRule"/>
</dbReference>
<dbReference type="GO" id="GO:0043716">
    <property type="term" value="F:2-hydroxy-3-keto-5-methylthiopentenyl-1-phosphate phosphatase activity"/>
    <property type="evidence" value="ECO:0007669"/>
    <property type="project" value="UniProtKB-UniRule"/>
</dbReference>
<dbReference type="GO" id="GO:0043874">
    <property type="term" value="F:acireductone synthase activity"/>
    <property type="evidence" value="ECO:0007669"/>
    <property type="project" value="UniProtKB-EC"/>
</dbReference>
<dbReference type="GO" id="GO:0000287">
    <property type="term" value="F:magnesium ion binding"/>
    <property type="evidence" value="ECO:0007669"/>
    <property type="project" value="UniProtKB-UniRule"/>
</dbReference>
<dbReference type="GO" id="GO:0019509">
    <property type="term" value="P:L-methionine salvage from methylthioadenosine"/>
    <property type="evidence" value="ECO:0007669"/>
    <property type="project" value="UniProtKB-UniRule"/>
</dbReference>
<dbReference type="CDD" id="cd01629">
    <property type="entry name" value="HAD_EP"/>
    <property type="match status" value="1"/>
</dbReference>
<dbReference type="FunFam" id="1.10.720.60:FF:000008">
    <property type="entry name" value="Enolase-phosphatase E1"/>
    <property type="match status" value="1"/>
</dbReference>
<dbReference type="Gene3D" id="1.10.720.60">
    <property type="match status" value="1"/>
</dbReference>
<dbReference type="Gene3D" id="3.40.50.1000">
    <property type="entry name" value="HAD superfamily/HAD-like"/>
    <property type="match status" value="1"/>
</dbReference>
<dbReference type="HAMAP" id="MF_01681">
    <property type="entry name" value="Salvage_MtnC"/>
    <property type="match status" value="1"/>
</dbReference>
<dbReference type="InterPro" id="IPR023943">
    <property type="entry name" value="Enolase-ppase_E1"/>
</dbReference>
<dbReference type="InterPro" id="IPR036412">
    <property type="entry name" value="HAD-like_sf"/>
</dbReference>
<dbReference type="InterPro" id="IPR006439">
    <property type="entry name" value="HAD-SF_hydro_IA"/>
</dbReference>
<dbReference type="InterPro" id="IPR023214">
    <property type="entry name" value="HAD_sf"/>
</dbReference>
<dbReference type="NCBIfam" id="TIGR01691">
    <property type="entry name" value="enolase-ppase"/>
    <property type="match status" value="1"/>
</dbReference>
<dbReference type="NCBIfam" id="TIGR01549">
    <property type="entry name" value="HAD-SF-IA-v1"/>
    <property type="match status" value="1"/>
</dbReference>
<dbReference type="PANTHER" id="PTHR20371">
    <property type="entry name" value="ENOLASE-PHOSPHATASE E1"/>
    <property type="match status" value="1"/>
</dbReference>
<dbReference type="PANTHER" id="PTHR20371:SF1">
    <property type="entry name" value="ENOLASE-PHOSPHATASE E1"/>
    <property type="match status" value="1"/>
</dbReference>
<dbReference type="Pfam" id="PF00702">
    <property type="entry name" value="Hydrolase"/>
    <property type="match status" value="1"/>
</dbReference>
<dbReference type="PRINTS" id="PR00413">
    <property type="entry name" value="HADHALOGNASE"/>
</dbReference>
<dbReference type="SFLD" id="SFLDG01133">
    <property type="entry name" value="C1.5.4:_Enolase-phosphatase_Li"/>
    <property type="match status" value="1"/>
</dbReference>
<dbReference type="SFLD" id="SFLDF00044">
    <property type="entry name" value="enolase-phosphatase"/>
    <property type="match status" value="1"/>
</dbReference>
<dbReference type="SUPFAM" id="SSF56784">
    <property type="entry name" value="HAD-like"/>
    <property type="match status" value="1"/>
</dbReference>
<protein>
    <recommendedName>
        <fullName evidence="1">Enolase-phosphatase E1</fullName>
        <ecNumber evidence="1">3.1.3.77</ecNumber>
    </recommendedName>
    <alternativeName>
        <fullName evidence="1">2,3-diketo-5-methylthio-1-phosphopentane phosphatase</fullName>
    </alternativeName>
</protein>
<comment type="function">
    <text evidence="1">Bifunctional enzyme that catalyzes the enolization of 2,3-diketo-5-methylthiopentyl-1-phosphate (DK-MTP-1-P) into the intermediate 2-hydroxy-3-keto-5-methylthiopentenyl-1-phosphate (HK-MTPenyl-1-P), which is then dephosphorylated to form the acireductone 1,2-dihydroxy-3-keto-5-methylthiopentene (DHK-MTPene).</text>
</comment>
<comment type="catalytic activity">
    <reaction evidence="1">
        <text>5-methylsulfanyl-2,3-dioxopentyl phosphate + H2O = 1,2-dihydroxy-5-(methylsulfanyl)pent-1-en-3-one + phosphate</text>
        <dbReference type="Rhea" id="RHEA:21700"/>
        <dbReference type="ChEBI" id="CHEBI:15377"/>
        <dbReference type="ChEBI" id="CHEBI:43474"/>
        <dbReference type="ChEBI" id="CHEBI:49252"/>
        <dbReference type="ChEBI" id="CHEBI:58828"/>
        <dbReference type="EC" id="3.1.3.77"/>
    </reaction>
</comment>
<comment type="cofactor">
    <cofactor evidence="1">
        <name>Mg(2+)</name>
        <dbReference type="ChEBI" id="CHEBI:18420"/>
    </cofactor>
    <text evidence="1">Binds 1 Mg(2+) ion per subunit.</text>
</comment>
<comment type="pathway">
    <text evidence="1">Amino-acid biosynthesis; L-methionine biosynthesis via salvage pathway; L-methionine from S-methyl-5-thio-alpha-D-ribose 1-phosphate: step 3/6.</text>
</comment>
<comment type="pathway">
    <text evidence="1">Amino-acid biosynthesis; L-methionine biosynthesis via salvage pathway; L-methionine from S-methyl-5-thio-alpha-D-ribose 1-phosphate: step 4/6.</text>
</comment>
<comment type="subunit">
    <text evidence="1">Monomer.</text>
</comment>
<comment type="similarity">
    <text evidence="1">Belongs to the HAD-like hydrolase superfamily. MasA/MtnC family.</text>
</comment>
<reference key="1">
    <citation type="submission" date="2006-08" db="EMBL/GenBank/DDBJ databases">
        <title>Complete sequence of chromosome 1 of Shewanella sp. MR-7.</title>
        <authorList>
            <person name="Copeland A."/>
            <person name="Lucas S."/>
            <person name="Lapidus A."/>
            <person name="Barry K."/>
            <person name="Detter J.C."/>
            <person name="Glavina del Rio T."/>
            <person name="Hammon N."/>
            <person name="Israni S."/>
            <person name="Dalin E."/>
            <person name="Tice H."/>
            <person name="Pitluck S."/>
            <person name="Kiss H."/>
            <person name="Brettin T."/>
            <person name="Bruce D."/>
            <person name="Han C."/>
            <person name="Tapia R."/>
            <person name="Gilna P."/>
            <person name="Schmutz J."/>
            <person name="Larimer F."/>
            <person name="Land M."/>
            <person name="Hauser L."/>
            <person name="Kyrpides N."/>
            <person name="Mikhailova N."/>
            <person name="Nealson K."/>
            <person name="Konstantinidis K."/>
            <person name="Klappenbach J."/>
            <person name="Tiedje J."/>
            <person name="Richardson P."/>
        </authorList>
    </citation>
    <scope>NUCLEOTIDE SEQUENCE [LARGE SCALE GENOMIC DNA]</scope>
    <source>
        <strain>MR-7</strain>
    </source>
</reference>
<feature type="chain" id="PRO_0000357410" description="Enolase-phosphatase E1">
    <location>
        <begin position="1"/>
        <end position="226"/>
    </location>
</feature>
<name>MTNC_SHESR</name>
<evidence type="ECO:0000255" key="1">
    <source>
        <dbReference type="HAMAP-Rule" id="MF_01681"/>
    </source>
</evidence>
<keyword id="KW-0028">Amino-acid biosynthesis</keyword>
<keyword id="KW-0378">Hydrolase</keyword>
<keyword id="KW-0460">Magnesium</keyword>
<keyword id="KW-0479">Metal-binding</keyword>
<keyword id="KW-0486">Methionine biosynthesis</keyword>